<keyword id="KW-0067">ATP-binding</keyword>
<keyword id="KW-0997">Cell inner membrane</keyword>
<keyword id="KW-1003">Cell membrane</keyword>
<keyword id="KW-0472">Membrane</keyword>
<keyword id="KW-0547">Nucleotide-binding</keyword>
<keyword id="KW-0918">Phosphonate transport</keyword>
<keyword id="KW-1185">Reference proteome</keyword>
<keyword id="KW-1278">Translocase</keyword>
<keyword id="KW-0813">Transport</keyword>
<organism>
    <name type="scientific">Cupriavidus metallidurans (strain ATCC 43123 / DSM 2839 / NBRC 102507 / CH34)</name>
    <name type="common">Ralstonia metallidurans</name>
    <dbReference type="NCBI Taxonomy" id="266264"/>
    <lineage>
        <taxon>Bacteria</taxon>
        <taxon>Pseudomonadati</taxon>
        <taxon>Pseudomonadota</taxon>
        <taxon>Betaproteobacteria</taxon>
        <taxon>Burkholderiales</taxon>
        <taxon>Burkholderiaceae</taxon>
        <taxon>Cupriavidus</taxon>
    </lineage>
</organism>
<feature type="chain" id="PRO_0000274736" description="Phosphonates import ATP-binding protein PhnC 2">
    <location>
        <begin position="1"/>
        <end position="279"/>
    </location>
</feature>
<feature type="domain" description="ABC transporter" evidence="1">
    <location>
        <begin position="10"/>
        <end position="253"/>
    </location>
</feature>
<feature type="region of interest" description="Disordered" evidence="2">
    <location>
        <begin position="253"/>
        <end position="279"/>
    </location>
</feature>
<feature type="compositionally biased region" description="Low complexity" evidence="2">
    <location>
        <begin position="253"/>
        <end position="262"/>
    </location>
</feature>
<feature type="compositionally biased region" description="Polar residues" evidence="2">
    <location>
        <begin position="263"/>
        <end position="279"/>
    </location>
</feature>
<feature type="binding site" evidence="1">
    <location>
        <begin position="43"/>
        <end position="50"/>
    </location>
    <ligand>
        <name>ATP</name>
        <dbReference type="ChEBI" id="CHEBI:30616"/>
    </ligand>
</feature>
<accession>Q1LJ08</accession>
<sequence length="279" mass="30166">MKLEKDRDVLSLKGVSVRYVDSTVALHPTSLDVKQGEFLVLLGASGAGKSTLLRSINGLVLPTKGEVSIPGLAGGVVNAKTLREHRKRCGMVFQQHHLIGRQSVLRNVLMGKLGDRGAFASLWPWSKKDKLEALTVIERVGLLEKALSRADALSGGQQQRVGIARALIQKPRILLADEPVASLDPATAHSVLTLLHEICKKDHLTAIVSLHQVELARSFADRIIGLRQGAVVFEGRAEQLSPDVARNLYAKQSNASNTSASTDSPRTLQSSQTKELLPC</sequence>
<protein>
    <recommendedName>
        <fullName evidence="1">Phosphonates import ATP-binding protein PhnC 2</fullName>
        <ecNumber evidence="1">7.3.2.2</ecNumber>
    </recommendedName>
</protein>
<dbReference type="EC" id="7.3.2.2" evidence="1"/>
<dbReference type="EMBL" id="CP000352">
    <property type="protein sequence ID" value="ABF09868.1"/>
    <property type="molecule type" value="Genomic_DNA"/>
</dbReference>
<dbReference type="SMR" id="Q1LJ08"/>
<dbReference type="STRING" id="266264.Rmet_2995"/>
<dbReference type="KEGG" id="rme:Rmet_2995"/>
<dbReference type="eggNOG" id="COG3638">
    <property type="taxonomic scope" value="Bacteria"/>
</dbReference>
<dbReference type="HOGENOM" id="CLU_000604_1_22_4"/>
<dbReference type="Proteomes" id="UP000002429">
    <property type="component" value="Chromosome"/>
</dbReference>
<dbReference type="GO" id="GO:0005886">
    <property type="term" value="C:plasma membrane"/>
    <property type="evidence" value="ECO:0007669"/>
    <property type="project" value="UniProtKB-SubCell"/>
</dbReference>
<dbReference type="GO" id="GO:0015416">
    <property type="term" value="F:ABC-type phosphonate transporter activity"/>
    <property type="evidence" value="ECO:0007669"/>
    <property type="project" value="UniProtKB-EC"/>
</dbReference>
<dbReference type="GO" id="GO:0005524">
    <property type="term" value="F:ATP binding"/>
    <property type="evidence" value="ECO:0007669"/>
    <property type="project" value="UniProtKB-KW"/>
</dbReference>
<dbReference type="GO" id="GO:0016887">
    <property type="term" value="F:ATP hydrolysis activity"/>
    <property type="evidence" value="ECO:0007669"/>
    <property type="project" value="InterPro"/>
</dbReference>
<dbReference type="CDD" id="cd03256">
    <property type="entry name" value="ABC_PhnC_transporter"/>
    <property type="match status" value="1"/>
</dbReference>
<dbReference type="Gene3D" id="3.40.50.300">
    <property type="entry name" value="P-loop containing nucleotide triphosphate hydrolases"/>
    <property type="match status" value="1"/>
</dbReference>
<dbReference type="InterPro" id="IPR003593">
    <property type="entry name" value="AAA+_ATPase"/>
</dbReference>
<dbReference type="InterPro" id="IPR003439">
    <property type="entry name" value="ABC_transporter-like_ATP-bd"/>
</dbReference>
<dbReference type="InterPro" id="IPR017871">
    <property type="entry name" value="ABC_transporter-like_CS"/>
</dbReference>
<dbReference type="InterPro" id="IPR012693">
    <property type="entry name" value="ABC_transpr_PhnC"/>
</dbReference>
<dbReference type="InterPro" id="IPR050086">
    <property type="entry name" value="MetN_ABC_transporter-like"/>
</dbReference>
<dbReference type="InterPro" id="IPR027417">
    <property type="entry name" value="P-loop_NTPase"/>
</dbReference>
<dbReference type="NCBIfam" id="TIGR02315">
    <property type="entry name" value="ABC_phnC"/>
    <property type="match status" value="1"/>
</dbReference>
<dbReference type="PANTHER" id="PTHR43166">
    <property type="entry name" value="AMINO ACID IMPORT ATP-BINDING PROTEIN"/>
    <property type="match status" value="1"/>
</dbReference>
<dbReference type="PANTHER" id="PTHR43166:SF6">
    <property type="entry name" value="PHOSPHONATES IMPORT ATP-BINDING PROTEIN PHNC"/>
    <property type="match status" value="1"/>
</dbReference>
<dbReference type="Pfam" id="PF00005">
    <property type="entry name" value="ABC_tran"/>
    <property type="match status" value="1"/>
</dbReference>
<dbReference type="SMART" id="SM00382">
    <property type="entry name" value="AAA"/>
    <property type="match status" value="1"/>
</dbReference>
<dbReference type="SUPFAM" id="SSF52540">
    <property type="entry name" value="P-loop containing nucleoside triphosphate hydrolases"/>
    <property type="match status" value="1"/>
</dbReference>
<dbReference type="PROSITE" id="PS00211">
    <property type="entry name" value="ABC_TRANSPORTER_1"/>
    <property type="match status" value="1"/>
</dbReference>
<dbReference type="PROSITE" id="PS50893">
    <property type="entry name" value="ABC_TRANSPORTER_2"/>
    <property type="match status" value="1"/>
</dbReference>
<dbReference type="PROSITE" id="PS51249">
    <property type="entry name" value="PHNC"/>
    <property type="match status" value="1"/>
</dbReference>
<reference key="1">
    <citation type="journal article" date="2010" name="PLoS ONE">
        <title>The complete genome sequence of Cupriavidus metallidurans strain CH34, a master survivalist in harsh and anthropogenic environments.</title>
        <authorList>
            <person name="Janssen P.J."/>
            <person name="Van Houdt R."/>
            <person name="Moors H."/>
            <person name="Monsieurs P."/>
            <person name="Morin N."/>
            <person name="Michaux A."/>
            <person name="Benotmane M.A."/>
            <person name="Leys N."/>
            <person name="Vallaeys T."/>
            <person name="Lapidus A."/>
            <person name="Monchy S."/>
            <person name="Medigue C."/>
            <person name="Taghavi S."/>
            <person name="McCorkle S."/>
            <person name="Dunn J."/>
            <person name="van der Lelie D."/>
            <person name="Mergeay M."/>
        </authorList>
    </citation>
    <scope>NUCLEOTIDE SEQUENCE [LARGE SCALE GENOMIC DNA]</scope>
    <source>
        <strain>ATCC 43123 / DSM 2839 / NBRC 102507 / CH34</strain>
    </source>
</reference>
<gene>
    <name evidence="1" type="primary">phnC2</name>
    <name type="ordered locus">Rmet_2995</name>
</gene>
<evidence type="ECO:0000255" key="1">
    <source>
        <dbReference type="HAMAP-Rule" id="MF_01713"/>
    </source>
</evidence>
<evidence type="ECO:0000256" key="2">
    <source>
        <dbReference type="SAM" id="MobiDB-lite"/>
    </source>
</evidence>
<proteinExistence type="inferred from homology"/>
<name>PHNC2_CUPMC</name>
<comment type="function">
    <text evidence="1">Part of the ABC transporter complex PhnCDE involved in phosphonates import. Responsible for energy coupling to the transport system.</text>
</comment>
<comment type="catalytic activity">
    <reaction evidence="1">
        <text>phosphonate(out) + ATP + H2O = phosphonate(in) + ADP + phosphate + H(+)</text>
        <dbReference type="Rhea" id="RHEA:18065"/>
        <dbReference type="ChEBI" id="CHEBI:15377"/>
        <dbReference type="ChEBI" id="CHEBI:15378"/>
        <dbReference type="ChEBI" id="CHEBI:16215"/>
        <dbReference type="ChEBI" id="CHEBI:30616"/>
        <dbReference type="ChEBI" id="CHEBI:43474"/>
        <dbReference type="ChEBI" id="CHEBI:456216"/>
        <dbReference type="EC" id="7.3.2.2"/>
    </reaction>
</comment>
<comment type="subunit">
    <text evidence="1">The complex is composed of two ATP-binding proteins (PhnC), two transmembrane proteins (PhnE) and a solute-binding protein (PhnD).</text>
</comment>
<comment type="subcellular location">
    <subcellularLocation>
        <location evidence="1">Cell inner membrane</location>
        <topology evidence="1">Peripheral membrane protein</topology>
    </subcellularLocation>
</comment>
<comment type="similarity">
    <text evidence="1">Belongs to the ABC transporter superfamily. Phosphonates importer (TC 3.A.1.9.1) family.</text>
</comment>